<dbReference type="EC" id="2.7.2.3"/>
<dbReference type="EMBL" id="AE002160">
    <property type="protein sequence ID" value="AAF73528.1"/>
    <property type="molecule type" value="Genomic_DNA"/>
</dbReference>
<dbReference type="RefSeq" id="WP_010229269.1">
    <property type="nucleotide sequence ID" value="NZ_CP063055.1"/>
</dbReference>
<dbReference type="SMR" id="Q9PLN4"/>
<dbReference type="GeneID" id="1245594"/>
<dbReference type="KEGG" id="cmu:TC_0065"/>
<dbReference type="eggNOG" id="COG0126">
    <property type="taxonomic scope" value="Bacteria"/>
</dbReference>
<dbReference type="HOGENOM" id="CLU_025427_0_2_0"/>
<dbReference type="OrthoDB" id="9808460at2"/>
<dbReference type="UniPathway" id="UPA00109">
    <property type="reaction ID" value="UER00185"/>
</dbReference>
<dbReference type="Proteomes" id="UP000000800">
    <property type="component" value="Chromosome"/>
</dbReference>
<dbReference type="GO" id="GO:0005829">
    <property type="term" value="C:cytosol"/>
    <property type="evidence" value="ECO:0007669"/>
    <property type="project" value="TreeGrafter"/>
</dbReference>
<dbReference type="GO" id="GO:0043531">
    <property type="term" value="F:ADP binding"/>
    <property type="evidence" value="ECO:0007669"/>
    <property type="project" value="TreeGrafter"/>
</dbReference>
<dbReference type="GO" id="GO:0005524">
    <property type="term" value="F:ATP binding"/>
    <property type="evidence" value="ECO:0007669"/>
    <property type="project" value="UniProtKB-KW"/>
</dbReference>
<dbReference type="GO" id="GO:0004618">
    <property type="term" value="F:phosphoglycerate kinase activity"/>
    <property type="evidence" value="ECO:0007669"/>
    <property type="project" value="UniProtKB-UniRule"/>
</dbReference>
<dbReference type="GO" id="GO:0006094">
    <property type="term" value="P:gluconeogenesis"/>
    <property type="evidence" value="ECO:0007669"/>
    <property type="project" value="TreeGrafter"/>
</dbReference>
<dbReference type="GO" id="GO:0006096">
    <property type="term" value="P:glycolytic process"/>
    <property type="evidence" value="ECO:0007669"/>
    <property type="project" value="UniProtKB-UniRule"/>
</dbReference>
<dbReference type="CDD" id="cd00318">
    <property type="entry name" value="Phosphoglycerate_kinase"/>
    <property type="match status" value="1"/>
</dbReference>
<dbReference type="FunFam" id="3.40.50.1260:FF:000007">
    <property type="entry name" value="Phosphoglycerate kinase"/>
    <property type="match status" value="1"/>
</dbReference>
<dbReference type="FunFam" id="3.40.50.1260:FF:000011">
    <property type="entry name" value="Phosphoglycerate kinase"/>
    <property type="match status" value="1"/>
</dbReference>
<dbReference type="Gene3D" id="3.40.50.1260">
    <property type="entry name" value="Phosphoglycerate kinase, N-terminal domain"/>
    <property type="match status" value="2"/>
</dbReference>
<dbReference type="HAMAP" id="MF_00145">
    <property type="entry name" value="Phosphoglyc_kinase"/>
    <property type="match status" value="1"/>
</dbReference>
<dbReference type="InterPro" id="IPR001576">
    <property type="entry name" value="Phosphoglycerate_kinase"/>
</dbReference>
<dbReference type="InterPro" id="IPR015911">
    <property type="entry name" value="Phosphoglycerate_kinase_CS"/>
</dbReference>
<dbReference type="InterPro" id="IPR015824">
    <property type="entry name" value="Phosphoglycerate_kinase_N"/>
</dbReference>
<dbReference type="InterPro" id="IPR036043">
    <property type="entry name" value="Phosphoglycerate_kinase_sf"/>
</dbReference>
<dbReference type="PANTHER" id="PTHR11406">
    <property type="entry name" value="PHOSPHOGLYCERATE KINASE"/>
    <property type="match status" value="1"/>
</dbReference>
<dbReference type="PANTHER" id="PTHR11406:SF23">
    <property type="entry name" value="PHOSPHOGLYCERATE KINASE 1, CHLOROPLASTIC-RELATED"/>
    <property type="match status" value="1"/>
</dbReference>
<dbReference type="Pfam" id="PF00162">
    <property type="entry name" value="PGK"/>
    <property type="match status" value="1"/>
</dbReference>
<dbReference type="PIRSF" id="PIRSF000724">
    <property type="entry name" value="Pgk"/>
    <property type="match status" value="1"/>
</dbReference>
<dbReference type="PRINTS" id="PR00477">
    <property type="entry name" value="PHGLYCKINASE"/>
</dbReference>
<dbReference type="SUPFAM" id="SSF53748">
    <property type="entry name" value="Phosphoglycerate kinase"/>
    <property type="match status" value="1"/>
</dbReference>
<dbReference type="PROSITE" id="PS00111">
    <property type="entry name" value="PGLYCERATE_KINASE"/>
    <property type="match status" value="1"/>
</dbReference>
<feature type="chain" id="PRO_0000145926" description="Phosphoglycerate kinase">
    <location>
        <begin position="1"/>
        <end position="403"/>
    </location>
</feature>
<feature type="binding site" evidence="1">
    <location>
        <begin position="21"/>
        <end position="23"/>
    </location>
    <ligand>
        <name>substrate</name>
    </ligand>
</feature>
<feature type="binding site" evidence="1">
    <location>
        <position position="36"/>
    </location>
    <ligand>
        <name>substrate</name>
    </ligand>
</feature>
<feature type="binding site" evidence="1">
    <location>
        <begin position="59"/>
        <end position="62"/>
    </location>
    <ligand>
        <name>substrate</name>
    </ligand>
</feature>
<feature type="binding site" evidence="1">
    <location>
        <position position="119"/>
    </location>
    <ligand>
        <name>substrate</name>
    </ligand>
</feature>
<feature type="binding site" evidence="1">
    <location>
        <position position="154"/>
    </location>
    <ligand>
        <name>substrate</name>
    </ligand>
</feature>
<feature type="binding site" evidence="1">
    <location>
        <position position="207"/>
    </location>
    <ligand>
        <name>ATP</name>
        <dbReference type="ChEBI" id="CHEBI:30616"/>
    </ligand>
</feature>
<feature type="binding site" evidence="1">
    <location>
        <position position="299"/>
    </location>
    <ligand>
        <name>ATP</name>
        <dbReference type="ChEBI" id="CHEBI:30616"/>
    </ligand>
</feature>
<feature type="binding site" evidence="1">
    <location>
        <position position="330"/>
    </location>
    <ligand>
        <name>ATP</name>
        <dbReference type="ChEBI" id="CHEBI:30616"/>
    </ligand>
</feature>
<feature type="binding site" evidence="1">
    <location>
        <begin position="357"/>
        <end position="360"/>
    </location>
    <ligand>
        <name>ATP</name>
        <dbReference type="ChEBI" id="CHEBI:30616"/>
    </ligand>
</feature>
<accession>Q9PLN4</accession>
<reference key="1">
    <citation type="journal article" date="2000" name="Nucleic Acids Res.">
        <title>Genome sequences of Chlamydia trachomatis MoPn and Chlamydia pneumoniae AR39.</title>
        <authorList>
            <person name="Read T.D."/>
            <person name="Brunham R.C."/>
            <person name="Shen C."/>
            <person name="Gill S.R."/>
            <person name="Heidelberg J.F."/>
            <person name="White O."/>
            <person name="Hickey E.K."/>
            <person name="Peterson J.D."/>
            <person name="Utterback T.R."/>
            <person name="Berry K.J."/>
            <person name="Bass S."/>
            <person name="Linher K.D."/>
            <person name="Weidman J.F."/>
            <person name="Khouri H.M."/>
            <person name="Craven B."/>
            <person name="Bowman C."/>
            <person name="Dodson R.J."/>
            <person name="Gwinn M.L."/>
            <person name="Nelson W.C."/>
            <person name="DeBoy R.T."/>
            <person name="Kolonay J.F."/>
            <person name="McClarty G."/>
            <person name="Salzberg S.L."/>
            <person name="Eisen J.A."/>
            <person name="Fraser C.M."/>
        </authorList>
    </citation>
    <scope>NUCLEOTIDE SEQUENCE [LARGE SCALE GENOMIC DNA]</scope>
    <source>
        <strain>MoPn / Nigg</strain>
    </source>
</reference>
<gene>
    <name type="primary">pgk</name>
    <name type="ordered locus">TC_0065</name>
</gene>
<evidence type="ECO:0000250" key="1"/>
<evidence type="ECO:0000305" key="2"/>
<proteinExistence type="inferred from homology"/>
<keyword id="KW-0067">ATP-binding</keyword>
<keyword id="KW-0963">Cytoplasm</keyword>
<keyword id="KW-0324">Glycolysis</keyword>
<keyword id="KW-0418">Kinase</keyword>
<keyword id="KW-0547">Nucleotide-binding</keyword>
<keyword id="KW-0808">Transferase</keyword>
<organism>
    <name type="scientific">Chlamydia muridarum (strain MoPn / Nigg)</name>
    <dbReference type="NCBI Taxonomy" id="243161"/>
    <lineage>
        <taxon>Bacteria</taxon>
        <taxon>Pseudomonadati</taxon>
        <taxon>Chlamydiota</taxon>
        <taxon>Chlamydiia</taxon>
        <taxon>Chlamydiales</taxon>
        <taxon>Chlamydiaceae</taxon>
        <taxon>Chlamydia/Chlamydophila group</taxon>
        <taxon>Chlamydia</taxon>
    </lineage>
</organism>
<name>PGK_CHLMU</name>
<comment type="catalytic activity">
    <reaction>
        <text>(2R)-3-phosphoglycerate + ATP = (2R)-3-phospho-glyceroyl phosphate + ADP</text>
        <dbReference type="Rhea" id="RHEA:14801"/>
        <dbReference type="ChEBI" id="CHEBI:30616"/>
        <dbReference type="ChEBI" id="CHEBI:57604"/>
        <dbReference type="ChEBI" id="CHEBI:58272"/>
        <dbReference type="ChEBI" id="CHEBI:456216"/>
        <dbReference type="EC" id="2.7.2.3"/>
    </reaction>
</comment>
<comment type="pathway">
    <text>Carbohydrate degradation; glycolysis; pyruvate from D-glyceraldehyde 3-phosphate: step 2/5.</text>
</comment>
<comment type="subunit">
    <text evidence="1">Monomer.</text>
</comment>
<comment type="subcellular location">
    <subcellularLocation>
        <location evidence="1">Cytoplasm</location>
    </subcellularLocation>
</comment>
<comment type="similarity">
    <text evidence="2">Belongs to the phosphoglycerate kinase family.</text>
</comment>
<sequence>MDKLSIKDLSPEGKKVLVRVDFNVPIKDGKILDDVRIRSAMPTINYLLKRDAAIILVSHLGRPKGDMFEEAYSLAPIVPVLEGYLGHHVPLSPDCVGEVARQAVAQLSPGRVLLLENVRFHRGEEHPEEDPSFAVELAAYADFYVNDAFGTSHRKHASVYRVPQMFPDRAAAGFLMEKELEFLGQHLLVEPKRPFTAILGGAKVSSKIGVIEALLSRVDNLVLAGGMGYTFLKAMNQQVGNSLVEETGIPLAKRVLEKARTQGVKIYLPVDAKVARRCETGEDWQELSIQEGIPEGFSGFDIGSKTIALFSEVIQDSATVFWNGPVGVYEVPPFDQGSKAIAQCLASHSSAVTVVGGGDAAAVVALAGCTSQISHVSTGGGASLEFLEKGYLPGTEILSPARS</sequence>
<protein>
    <recommendedName>
        <fullName>Phosphoglycerate kinase</fullName>
        <ecNumber>2.7.2.3</ecNumber>
    </recommendedName>
</protein>